<name>RLME_LEGPL</name>
<keyword id="KW-0963">Cytoplasm</keyword>
<keyword id="KW-0489">Methyltransferase</keyword>
<keyword id="KW-0698">rRNA processing</keyword>
<keyword id="KW-0949">S-adenosyl-L-methionine</keyword>
<keyword id="KW-0808">Transferase</keyword>
<feature type="chain" id="PRO_0000155506" description="Ribosomal RNA large subunit methyltransferase E">
    <location>
        <begin position="1"/>
        <end position="206"/>
    </location>
</feature>
<feature type="active site" description="Proton acceptor" evidence="1">
    <location>
        <position position="161"/>
    </location>
</feature>
<feature type="binding site" evidence="1">
    <location>
        <position position="60"/>
    </location>
    <ligand>
        <name>S-adenosyl-L-methionine</name>
        <dbReference type="ChEBI" id="CHEBI:59789"/>
    </ligand>
</feature>
<feature type="binding site" evidence="1">
    <location>
        <position position="62"/>
    </location>
    <ligand>
        <name>S-adenosyl-L-methionine</name>
        <dbReference type="ChEBI" id="CHEBI:59789"/>
    </ligand>
</feature>
<feature type="binding site" evidence="1">
    <location>
        <position position="80"/>
    </location>
    <ligand>
        <name>S-adenosyl-L-methionine</name>
        <dbReference type="ChEBI" id="CHEBI:59789"/>
    </ligand>
</feature>
<feature type="binding site" evidence="1">
    <location>
        <position position="96"/>
    </location>
    <ligand>
        <name>S-adenosyl-L-methionine</name>
        <dbReference type="ChEBI" id="CHEBI:59789"/>
    </ligand>
</feature>
<feature type="binding site" evidence="1">
    <location>
        <position position="121"/>
    </location>
    <ligand>
        <name>S-adenosyl-L-methionine</name>
        <dbReference type="ChEBI" id="CHEBI:59789"/>
    </ligand>
</feature>
<evidence type="ECO:0000255" key="1">
    <source>
        <dbReference type="HAMAP-Rule" id="MF_01547"/>
    </source>
</evidence>
<dbReference type="EC" id="2.1.1.166" evidence="1"/>
<dbReference type="EMBL" id="CR628337">
    <property type="protein sequence ID" value="CAH16953.1"/>
    <property type="molecule type" value="Genomic_DNA"/>
</dbReference>
<dbReference type="RefSeq" id="WP_011216638.1">
    <property type="nucleotide sequence ID" value="NC_006369.1"/>
</dbReference>
<dbReference type="SMR" id="Q5WT13"/>
<dbReference type="KEGG" id="lpf:lpl2712"/>
<dbReference type="LegioList" id="lpl2712"/>
<dbReference type="HOGENOM" id="CLU_009422_4_0_6"/>
<dbReference type="Proteomes" id="UP000002517">
    <property type="component" value="Chromosome"/>
</dbReference>
<dbReference type="GO" id="GO:0005737">
    <property type="term" value="C:cytoplasm"/>
    <property type="evidence" value="ECO:0007669"/>
    <property type="project" value="UniProtKB-SubCell"/>
</dbReference>
<dbReference type="GO" id="GO:0008650">
    <property type="term" value="F:rRNA (uridine-2'-O-)-methyltransferase activity"/>
    <property type="evidence" value="ECO:0007669"/>
    <property type="project" value="UniProtKB-UniRule"/>
</dbReference>
<dbReference type="FunFam" id="3.40.50.150:FF:000005">
    <property type="entry name" value="Ribosomal RNA large subunit methyltransferase E"/>
    <property type="match status" value="1"/>
</dbReference>
<dbReference type="Gene3D" id="3.40.50.150">
    <property type="entry name" value="Vaccinia Virus protein VP39"/>
    <property type="match status" value="1"/>
</dbReference>
<dbReference type="HAMAP" id="MF_01547">
    <property type="entry name" value="RNA_methyltr_E"/>
    <property type="match status" value="1"/>
</dbReference>
<dbReference type="InterPro" id="IPR050082">
    <property type="entry name" value="RNA_methyltr_RlmE"/>
</dbReference>
<dbReference type="InterPro" id="IPR002877">
    <property type="entry name" value="RNA_MeTrfase_FtsJ_dom"/>
</dbReference>
<dbReference type="InterPro" id="IPR015507">
    <property type="entry name" value="rRNA-MeTfrase_E"/>
</dbReference>
<dbReference type="InterPro" id="IPR029063">
    <property type="entry name" value="SAM-dependent_MTases_sf"/>
</dbReference>
<dbReference type="NCBIfam" id="NF008390">
    <property type="entry name" value="PRK11188.1"/>
    <property type="match status" value="1"/>
</dbReference>
<dbReference type="PANTHER" id="PTHR10920">
    <property type="entry name" value="RIBOSOMAL RNA METHYLTRANSFERASE"/>
    <property type="match status" value="1"/>
</dbReference>
<dbReference type="PANTHER" id="PTHR10920:SF18">
    <property type="entry name" value="RRNA METHYLTRANSFERASE 2, MITOCHONDRIAL"/>
    <property type="match status" value="1"/>
</dbReference>
<dbReference type="Pfam" id="PF01728">
    <property type="entry name" value="FtsJ"/>
    <property type="match status" value="1"/>
</dbReference>
<dbReference type="PIRSF" id="PIRSF005461">
    <property type="entry name" value="23S_rRNA_mtase"/>
    <property type="match status" value="1"/>
</dbReference>
<dbReference type="SUPFAM" id="SSF53335">
    <property type="entry name" value="S-adenosyl-L-methionine-dependent methyltransferases"/>
    <property type="match status" value="1"/>
</dbReference>
<proteinExistence type="inferred from homology"/>
<reference key="1">
    <citation type="journal article" date="2004" name="Nat. Genet.">
        <title>Evidence in the Legionella pneumophila genome for exploitation of host cell functions and high genome plasticity.</title>
        <authorList>
            <person name="Cazalet C."/>
            <person name="Rusniok C."/>
            <person name="Brueggemann H."/>
            <person name="Zidane N."/>
            <person name="Magnier A."/>
            <person name="Ma L."/>
            <person name="Tichit M."/>
            <person name="Jarraud S."/>
            <person name="Bouchier C."/>
            <person name="Vandenesch F."/>
            <person name="Kunst F."/>
            <person name="Etienne J."/>
            <person name="Glaser P."/>
            <person name="Buchrieser C."/>
        </authorList>
    </citation>
    <scope>NUCLEOTIDE SEQUENCE [LARGE SCALE GENOMIC DNA]</scope>
    <source>
        <strain>Lens</strain>
    </source>
</reference>
<organism>
    <name type="scientific">Legionella pneumophila (strain Lens)</name>
    <dbReference type="NCBI Taxonomy" id="297245"/>
    <lineage>
        <taxon>Bacteria</taxon>
        <taxon>Pseudomonadati</taxon>
        <taxon>Pseudomonadota</taxon>
        <taxon>Gammaproteobacteria</taxon>
        <taxon>Legionellales</taxon>
        <taxon>Legionellaceae</taxon>
        <taxon>Legionella</taxon>
    </lineage>
</organism>
<accession>Q5WT13</accession>
<gene>
    <name evidence="1" type="primary">rlmE</name>
    <name evidence="1" type="synonym">ftsJ</name>
    <name evidence="1" type="synonym">rrmJ</name>
    <name type="ordered locus">lpl2712</name>
</gene>
<comment type="function">
    <text evidence="1">Specifically methylates the uridine in position 2552 of 23S rRNA at the 2'-O position of the ribose in the fully assembled 50S ribosomal subunit.</text>
</comment>
<comment type="catalytic activity">
    <reaction evidence="1">
        <text>uridine(2552) in 23S rRNA + S-adenosyl-L-methionine = 2'-O-methyluridine(2552) in 23S rRNA + S-adenosyl-L-homocysteine + H(+)</text>
        <dbReference type="Rhea" id="RHEA:42720"/>
        <dbReference type="Rhea" id="RHEA-COMP:10202"/>
        <dbReference type="Rhea" id="RHEA-COMP:10203"/>
        <dbReference type="ChEBI" id="CHEBI:15378"/>
        <dbReference type="ChEBI" id="CHEBI:57856"/>
        <dbReference type="ChEBI" id="CHEBI:59789"/>
        <dbReference type="ChEBI" id="CHEBI:65315"/>
        <dbReference type="ChEBI" id="CHEBI:74478"/>
        <dbReference type="EC" id="2.1.1.166"/>
    </reaction>
</comment>
<comment type="subcellular location">
    <subcellularLocation>
        <location evidence="1">Cytoplasm</location>
    </subcellularLocation>
</comment>
<comment type="similarity">
    <text evidence="1">Belongs to the class I-like SAM-binding methyltransferase superfamily. RNA methyltransferase RlmE family.</text>
</comment>
<protein>
    <recommendedName>
        <fullName evidence="1">Ribosomal RNA large subunit methyltransferase E</fullName>
        <ecNumber evidence="1">2.1.1.166</ecNumber>
    </recommendedName>
    <alternativeName>
        <fullName evidence="1">23S rRNA Um2552 methyltransferase</fullName>
    </alternativeName>
    <alternativeName>
        <fullName evidence="1">rRNA (uridine-2'-O-)-methyltransferase</fullName>
    </alternativeName>
</protein>
<sequence length="206" mass="23136">MNRTKSSKRWLQEHFDDVYVKKAQAEGYRSRAVYKLKEIDDKESLIKPGMTVVDLGASPGGWTQYASEKMKGSGRLVALDILPMDALPNVEFILGDFREDNVLQELINLIPQRTLDLLLSDMAPNMSGSSAIDIPRAMYLVELAFDFAEKMLKPGGNMLVKIFHGSGFDELVKQARASFEKVVIRKPSASRSRSKETYLLAKGYNL</sequence>